<protein>
    <recommendedName>
        <fullName evidence="1">Holliday junction branch migration complex subunit RuvB</fullName>
        <ecNumber evidence="1">3.6.4.-</ecNumber>
    </recommendedName>
</protein>
<gene>
    <name evidence="1" type="primary">ruvB</name>
    <name type="ordered locus">RHE_CH03482</name>
</gene>
<dbReference type="EC" id="3.6.4.-" evidence="1"/>
<dbReference type="EMBL" id="AF175525">
    <property type="protein sequence ID" value="AAF36814.1"/>
    <property type="molecule type" value="Genomic_DNA"/>
</dbReference>
<dbReference type="EMBL" id="CP000133">
    <property type="protein sequence ID" value="ABC92238.1"/>
    <property type="molecule type" value="Genomic_DNA"/>
</dbReference>
<dbReference type="RefSeq" id="WP_011426705.1">
    <property type="nucleotide sequence ID" value="NC_007761.1"/>
</dbReference>
<dbReference type="SMR" id="Q2K4J8"/>
<dbReference type="KEGG" id="ret:RHE_CH03482"/>
<dbReference type="eggNOG" id="COG2255">
    <property type="taxonomic scope" value="Bacteria"/>
</dbReference>
<dbReference type="HOGENOM" id="CLU_055599_1_0_5"/>
<dbReference type="OrthoDB" id="9804478at2"/>
<dbReference type="Proteomes" id="UP000001936">
    <property type="component" value="Chromosome"/>
</dbReference>
<dbReference type="GO" id="GO:0005737">
    <property type="term" value="C:cytoplasm"/>
    <property type="evidence" value="ECO:0007669"/>
    <property type="project" value="UniProtKB-SubCell"/>
</dbReference>
<dbReference type="GO" id="GO:0048476">
    <property type="term" value="C:Holliday junction resolvase complex"/>
    <property type="evidence" value="ECO:0007669"/>
    <property type="project" value="UniProtKB-UniRule"/>
</dbReference>
<dbReference type="GO" id="GO:0005524">
    <property type="term" value="F:ATP binding"/>
    <property type="evidence" value="ECO:0007669"/>
    <property type="project" value="UniProtKB-UniRule"/>
</dbReference>
<dbReference type="GO" id="GO:0016887">
    <property type="term" value="F:ATP hydrolysis activity"/>
    <property type="evidence" value="ECO:0007669"/>
    <property type="project" value="InterPro"/>
</dbReference>
<dbReference type="GO" id="GO:0000400">
    <property type="term" value="F:four-way junction DNA binding"/>
    <property type="evidence" value="ECO:0007669"/>
    <property type="project" value="UniProtKB-UniRule"/>
</dbReference>
<dbReference type="GO" id="GO:0009378">
    <property type="term" value="F:four-way junction helicase activity"/>
    <property type="evidence" value="ECO:0007669"/>
    <property type="project" value="InterPro"/>
</dbReference>
<dbReference type="GO" id="GO:0006310">
    <property type="term" value="P:DNA recombination"/>
    <property type="evidence" value="ECO:0007669"/>
    <property type="project" value="UniProtKB-UniRule"/>
</dbReference>
<dbReference type="GO" id="GO:0006281">
    <property type="term" value="P:DNA repair"/>
    <property type="evidence" value="ECO:0007669"/>
    <property type="project" value="UniProtKB-UniRule"/>
</dbReference>
<dbReference type="CDD" id="cd00009">
    <property type="entry name" value="AAA"/>
    <property type="match status" value="1"/>
</dbReference>
<dbReference type="Gene3D" id="1.10.8.60">
    <property type="match status" value="1"/>
</dbReference>
<dbReference type="Gene3D" id="3.40.50.300">
    <property type="entry name" value="P-loop containing nucleotide triphosphate hydrolases"/>
    <property type="match status" value="1"/>
</dbReference>
<dbReference type="Gene3D" id="1.10.10.10">
    <property type="entry name" value="Winged helix-like DNA-binding domain superfamily/Winged helix DNA-binding domain"/>
    <property type="match status" value="1"/>
</dbReference>
<dbReference type="HAMAP" id="MF_00016">
    <property type="entry name" value="DNA_HJ_migration_RuvB"/>
    <property type="match status" value="1"/>
</dbReference>
<dbReference type="InterPro" id="IPR003593">
    <property type="entry name" value="AAA+_ATPase"/>
</dbReference>
<dbReference type="InterPro" id="IPR041445">
    <property type="entry name" value="AAA_lid_4"/>
</dbReference>
<dbReference type="InterPro" id="IPR000641">
    <property type="entry name" value="CbxX/CfxQ"/>
</dbReference>
<dbReference type="InterPro" id="IPR004605">
    <property type="entry name" value="DNA_helicase_Holl-junc_RuvB"/>
</dbReference>
<dbReference type="InterPro" id="IPR027417">
    <property type="entry name" value="P-loop_NTPase"/>
</dbReference>
<dbReference type="InterPro" id="IPR008824">
    <property type="entry name" value="RuvB-like_N"/>
</dbReference>
<dbReference type="InterPro" id="IPR008823">
    <property type="entry name" value="RuvB_C"/>
</dbReference>
<dbReference type="InterPro" id="IPR036388">
    <property type="entry name" value="WH-like_DNA-bd_sf"/>
</dbReference>
<dbReference type="InterPro" id="IPR036390">
    <property type="entry name" value="WH_DNA-bd_sf"/>
</dbReference>
<dbReference type="NCBIfam" id="NF000868">
    <property type="entry name" value="PRK00080.1"/>
    <property type="match status" value="1"/>
</dbReference>
<dbReference type="NCBIfam" id="TIGR00635">
    <property type="entry name" value="ruvB"/>
    <property type="match status" value="1"/>
</dbReference>
<dbReference type="PANTHER" id="PTHR42848">
    <property type="match status" value="1"/>
</dbReference>
<dbReference type="PANTHER" id="PTHR42848:SF1">
    <property type="entry name" value="HOLLIDAY JUNCTION BRANCH MIGRATION COMPLEX SUBUNIT RUVB"/>
    <property type="match status" value="1"/>
</dbReference>
<dbReference type="Pfam" id="PF17864">
    <property type="entry name" value="AAA_lid_4"/>
    <property type="match status" value="1"/>
</dbReference>
<dbReference type="Pfam" id="PF05491">
    <property type="entry name" value="RuvB_C"/>
    <property type="match status" value="1"/>
</dbReference>
<dbReference type="Pfam" id="PF05496">
    <property type="entry name" value="RuvB_N"/>
    <property type="match status" value="1"/>
</dbReference>
<dbReference type="PRINTS" id="PR00819">
    <property type="entry name" value="CBXCFQXSUPER"/>
</dbReference>
<dbReference type="SMART" id="SM00382">
    <property type="entry name" value="AAA"/>
    <property type="match status" value="1"/>
</dbReference>
<dbReference type="SUPFAM" id="SSF52540">
    <property type="entry name" value="P-loop containing nucleoside triphosphate hydrolases"/>
    <property type="match status" value="1"/>
</dbReference>
<dbReference type="SUPFAM" id="SSF46785">
    <property type="entry name" value="Winged helix' DNA-binding domain"/>
    <property type="match status" value="1"/>
</dbReference>
<organism>
    <name type="scientific">Rhizobium etli (strain ATCC 51251 / DSM 11541 / JCM 21823 / NBRC 15573 / CFN 42)</name>
    <dbReference type="NCBI Taxonomy" id="347834"/>
    <lineage>
        <taxon>Bacteria</taxon>
        <taxon>Pseudomonadati</taxon>
        <taxon>Pseudomonadota</taxon>
        <taxon>Alphaproteobacteria</taxon>
        <taxon>Hyphomicrobiales</taxon>
        <taxon>Rhizobiaceae</taxon>
        <taxon>Rhizobium/Agrobacterium group</taxon>
        <taxon>Rhizobium</taxon>
    </lineage>
</organism>
<comment type="function">
    <text evidence="1">The RuvA-RuvB-RuvC complex processes Holliday junction (HJ) DNA during genetic recombination and DNA repair, while the RuvA-RuvB complex plays an important role in the rescue of blocked DNA replication forks via replication fork reversal (RFR). RuvA specifically binds to HJ cruciform DNA, conferring on it an open structure. The RuvB hexamer acts as an ATP-dependent pump, pulling dsDNA into and through the RuvAB complex. RuvB forms 2 homohexamers on either side of HJ DNA bound by 1 or 2 RuvA tetramers; 4 subunits per hexamer contact DNA at a time. Coordinated motions by a converter formed by DNA-disengaged RuvB subunits stimulates ATP hydrolysis and nucleotide exchange. Immobilization of the converter enables RuvB to convert the ATP-contained energy into a lever motion, pulling 2 nucleotides of DNA out of the RuvA tetramer per ATP hydrolyzed, thus driving DNA branch migration. The RuvB motors rotate together with the DNA substrate, which together with the progressing nucleotide cycle form the mechanistic basis for DNA recombination by continuous HJ branch migration. Branch migration allows RuvC to scan DNA until it finds its consensus sequence, where it cleaves and resolves cruciform DNA.</text>
</comment>
<comment type="catalytic activity">
    <reaction evidence="1">
        <text>ATP + H2O = ADP + phosphate + H(+)</text>
        <dbReference type="Rhea" id="RHEA:13065"/>
        <dbReference type="ChEBI" id="CHEBI:15377"/>
        <dbReference type="ChEBI" id="CHEBI:15378"/>
        <dbReference type="ChEBI" id="CHEBI:30616"/>
        <dbReference type="ChEBI" id="CHEBI:43474"/>
        <dbReference type="ChEBI" id="CHEBI:456216"/>
    </reaction>
</comment>
<comment type="subunit">
    <text evidence="1">Homohexamer. Forms an RuvA(8)-RuvB(12)-Holliday junction (HJ) complex. HJ DNA is sandwiched between 2 RuvA tetramers; dsDNA enters through RuvA and exits via RuvB. An RuvB hexamer assembles on each DNA strand where it exits the tetramer. Each RuvB hexamer is contacted by two RuvA subunits (via domain III) on 2 adjacent RuvB subunits; this complex drives branch migration. In the full resolvosome a probable DNA-RuvA(4)-RuvB(12)-RuvC(2) complex forms which resolves the HJ.</text>
</comment>
<comment type="subcellular location">
    <subcellularLocation>
        <location evidence="1">Cytoplasm</location>
    </subcellularLocation>
</comment>
<comment type="domain">
    <text evidence="1">Has 3 domains, the large (RuvB-L) and small ATPase (RuvB-S) domains and the C-terminal head (RuvB-H) domain. The head domain binds DNA, while the ATPase domains jointly bind ATP, ADP or are empty depending on the state of the subunit in the translocation cycle. During a single DNA translocation step the structure of each domain remains the same, but their relative positions change.</text>
</comment>
<comment type="similarity">
    <text evidence="1">Belongs to the RuvB family.</text>
</comment>
<feature type="chain" id="PRO_1000001455" description="Holliday junction branch migration complex subunit RuvB">
    <location>
        <begin position="1"/>
        <end position="346"/>
    </location>
</feature>
<feature type="region of interest" description="Large ATPase domain (RuvB-L)" evidence="1">
    <location>
        <begin position="1"/>
        <end position="182"/>
    </location>
</feature>
<feature type="region of interest" description="Small ATPAse domain (RuvB-S)" evidence="1">
    <location>
        <begin position="183"/>
        <end position="253"/>
    </location>
</feature>
<feature type="region of interest" description="Head domain (RuvB-H)" evidence="1">
    <location>
        <begin position="256"/>
        <end position="346"/>
    </location>
</feature>
<feature type="binding site" evidence="1">
    <location>
        <position position="21"/>
    </location>
    <ligand>
        <name>ATP</name>
        <dbReference type="ChEBI" id="CHEBI:30616"/>
    </ligand>
</feature>
<feature type="binding site" evidence="1">
    <location>
        <position position="22"/>
    </location>
    <ligand>
        <name>ATP</name>
        <dbReference type="ChEBI" id="CHEBI:30616"/>
    </ligand>
</feature>
<feature type="binding site" evidence="1">
    <location>
        <position position="63"/>
    </location>
    <ligand>
        <name>ATP</name>
        <dbReference type="ChEBI" id="CHEBI:30616"/>
    </ligand>
</feature>
<feature type="binding site" evidence="1">
    <location>
        <position position="66"/>
    </location>
    <ligand>
        <name>ATP</name>
        <dbReference type="ChEBI" id="CHEBI:30616"/>
    </ligand>
</feature>
<feature type="binding site" evidence="1">
    <location>
        <position position="67"/>
    </location>
    <ligand>
        <name>ATP</name>
        <dbReference type="ChEBI" id="CHEBI:30616"/>
    </ligand>
</feature>
<feature type="binding site" evidence="1">
    <location>
        <position position="67"/>
    </location>
    <ligand>
        <name>Mg(2+)</name>
        <dbReference type="ChEBI" id="CHEBI:18420"/>
    </ligand>
</feature>
<feature type="binding site" evidence="1">
    <location>
        <position position="68"/>
    </location>
    <ligand>
        <name>ATP</name>
        <dbReference type="ChEBI" id="CHEBI:30616"/>
    </ligand>
</feature>
<feature type="binding site" evidence="1">
    <location>
        <begin position="129"/>
        <end position="131"/>
    </location>
    <ligand>
        <name>ATP</name>
        <dbReference type="ChEBI" id="CHEBI:30616"/>
    </ligand>
</feature>
<feature type="binding site" evidence="1">
    <location>
        <position position="172"/>
    </location>
    <ligand>
        <name>ATP</name>
        <dbReference type="ChEBI" id="CHEBI:30616"/>
    </ligand>
</feature>
<feature type="binding site" evidence="1">
    <location>
        <position position="182"/>
    </location>
    <ligand>
        <name>ATP</name>
        <dbReference type="ChEBI" id="CHEBI:30616"/>
    </ligand>
</feature>
<feature type="binding site" evidence="1">
    <location>
        <position position="219"/>
    </location>
    <ligand>
        <name>ATP</name>
        <dbReference type="ChEBI" id="CHEBI:30616"/>
    </ligand>
</feature>
<feature type="binding site" evidence="1">
    <location>
        <position position="292"/>
    </location>
    <ligand>
        <name>DNA</name>
        <dbReference type="ChEBI" id="CHEBI:16991"/>
    </ligand>
</feature>
<feature type="binding site" evidence="1">
    <location>
        <position position="311"/>
    </location>
    <ligand>
        <name>DNA</name>
        <dbReference type="ChEBI" id="CHEBI:16991"/>
    </ligand>
</feature>
<feature type="binding site" evidence="1">
    <location>
        <position position="316"/>
    </location>
    <ligand>
        <name>DNA</name>
        <dbReference type="ChEBI" id="CHEBI:16991"/>
    </ligand>
</feature>
<name>RUVB_RHIEC</name>
<accession>Q2K4J8</accession>
<accession>Q9L9C3</accession>
<reference key="1">
    <citation type="journal article" date="2000" name="Gene">
        <title>Role of the ruvB gene in homologous and homeologous recombination in Rhizobium etli.</title>
        <authorList>
            <person name="Martinez-Salazar J.M."/>
            <person name="Romero D."/>
        </authorList>
    </citation>
    <scope>NUCLEOTIDE SEQUENCE [GENOMIC DNA]</scope>
    <source>
        <strain>CE3</strain>
    </source>
</reference>
<reference key="2">
    <citation type="journal article" date="2006" name="Proc. Natl. Acad. Sci. U.S.A.">
        <title>The partitioned Rhizobium etli genome: genetic and metabolic redundancy in seven interacting replicons.</title>
        <authorList>
            <person name="Gonzalez V."/>
            <person name="Santamaria R.I."/>
            <person name="Bustos P."/>
            <person name="Hernandez-Gonzalez I."/>
            <person name="Medrano-Soto A."/>
            <person name="Moreno-Hagelsieb G."/>
            <person name="Janga S.C."/>
            <person name="Ramirez M.A."/>
            <person name="Jimenez-Jacinto V."/>
            <person name="Collado-Vides J."/>
            <person name="Davila G."/>
        </authorList>
    </citation>
    <scope>NUCLEOTIDE SEQUENCE [LARGE SCALE GENOMIC DNA]</scope>
    <source>
        <strain>ATCC 51251 / DSM 11541 / JCM 21823 / NBRC 15573 / CFN 42</strain>
    </source>
</reference>
<proteinExistence type="inferred from homology"/>
<sequence>MSEPARLISPEKRGEDLDITLRPQSLDEFTGQAEARANLKVFIEAAKNRGEALDHVLFVGPPGLGKTTLAQIMAKELGVNFRSTSGPVIAKAGDLAALLTNLEERDVLFIDEIHRLNPAVEEILYPAMEDYQLDLIIGEGPAARSVKIDLSKFTLVAATTRLGLLTTPLRDRFGIPVRLTFYTVEELELIVRRGARLMNLPMTEEGAREIARRARGTPRIAGRLLRRVRDFAEVARAEAVTREIADEALTRLLVDNVGFDQLDKRYLNMIAVNFGGGPVGIETIAAGLSEPRDAIEDIIEPYMIQQGFIQRTPRGRVLTAIAWKHLGMQPPKEMEAAQFRLFQEDD</sequence>
<keyword id="KW-0067">ATP-binding</keyword>
<keyword id="KW-0963">Cytoplasm</keyword>
<keyword id="KW-0227">DNA damage</keyword>
<keyword id="KW-0233">DNA recombination</keyword>
<keyword id="KW-0234">DNA repair</keyword>
<keyword id="KW-0238">DNA-binding</keyword>
<keyword id="KW-0378">Hydrolase</keyword>
<keyword id="KW-0547">Nucleotide-binding</keyword>
<keyword id="KW-1185">Reference proteome</keyword>
<evidence type="ECO:0000255" key="1">
    <source>
        <dbReference type="HAMAP-Rule" id="MF_00016"/>
    </source>
</evidence>